<organism>
    <name type="scientific">Lactobacillus gasseri (strain ATCC 33323 / DSM 20243 / BCRC 14619 / CIP 102991 / JCM 1131 / KCTC 3163 / NCIMB 11718 / NCTC 13722 / AM63)</name>
    <dbReference type="NCBI Taxonomy" id="324831"/>
    <lineage>
        <taxon>Bacteria</taxon>
        <taxon>Bacillati</taxon>
        <taxon>Bacillota</taxon>
        <taxon>Bacilli</taxon>
        <taxon>Lactobacillales</taxon>
        <taxon>Lactobacillaceae</taxon>
        <taxon>Lactobacillus</taxon>
    </lineage>
</organism>
<protein>
    <recommendedName>
        <fullName evidence="1">Redox-sensing transcriptional repressor Rex</fullName>
    </recommendedName>
</protein>
<keyword id="KW-0963">Cytoplasm</keyword>
<keyword id="KW-0238">DNA-binding</keyword>
<keyword id="KW-0520">NAD</keyword>
<keyword id="KW-0678">Repressor</keyword>
<keyword id="KW-0804">Transcription</keyword>
<keyword id="KW-0805">Transcription regulation</keyword>
<reference key="1">
    <citation type="journal article" date="2006" name="Proc. Natl. Acad. Sci. U.S.A.">
        <title>Comparative genomics of the lactic acid bacteria.</title>
        <authorList>
            <person name="Makarova K.S."/>
            <person name="Slesarev A."/>
            <person name="Wolf Y.I."/>
            <person name="Sorokin A."/>
            <person name="Mirkin B."/>
            <person name="Koonin E.V."/>
            <person name="Pavlov A."/>
            <person name="Pavlova N."/>
            <person name="Karamychev V."/>
            <person name="Polouchine N."/>
            <person name="Shakhova V."/>
            <person name="Grigoriev I."/>
            <person name="Lou Y."/>
            <person name="Rohksar D."/>
            <person name="Lucas S."/>
            <person name="Huang K."/>
            <person name="Goodstein D.M."/>
            <person name="Hawkins T."/>
            <person name="Plengvidhya V."/>
            <person name="Welker D."/>
            <person name="Hughes J."/>
            <person name="Goh Y."/>
            <person name="Benson A."/>
            <person name="Baldwin K."/>
            <person name="Lee J.-H."/>
            <person name="Diaz-Muniz I."/>
            <person name="Dosti B."/>
            <person name="Smeianov V."/>
            <person name="Wechter W."/>
            <person name="Barabote R."/>
            <person name="Lorca G."/>
            <person name="Altermann E."/>
            <person name="Barrangou R."/>
            <person name="Ganesan B."/>
            <person name="Xie Y."/>
            <person name="Rawsthorne H."/>
            <person name="Tamir D."/>
            <person name="Parker C."/>
            <person name="Breidt F."/>
            <person name="Broadbent J.R."/>
            <person name="Hutkins R."/>
            <person name="O'Sullivan D."/>
            <person name="Steele J."/>
            <person name="Unlu G."/>
            <person name="Saier M.H. Jr."/>
            <person name="Klaenhammer T."/>
            <person name="Richardson P."/>
            <person name="Kozyavkin S."/>
            <person name="Weimer B.C."/>
            <person name="Mills D.A."/>
        </authorList>
    </citation>
    <scope>NUCLEOTIDE SEQUENCE [LARGE SCALE GENOMIC DNA]</scope>
    <source>
        <strain>ATCC 33323 / DSM 20243 / BCRC 14619 / CIP 102991 / JCM 1131 / KCTC 3163 / NCIMB 11718 / NCTC 13722 / AM63</strain>
    </source>
</reference>
<dbReference type="EMBL" id="CP000413">
    <property type="protein sequence ID" value="ABJ59808.1"/>
    <property type="molecule type" value="Genomic_DNA"/>
</dbReference>
<dbReference type="RefSeq" id="WP_003647732.1">
    <property type="nucleotide sequence ID" value="NZ_WBMG01000001.1"/>
</dbReference>
<dbReference type="SMR" id="Q045R4"/>
<dbReference type="KEGG" id="lga:LGAS_0403"/>
<dbReference type="HOGENOM" id="CLU_061534_1_1_9"/>
<dbReference type="BioCyc" id="LGAS324831:G1G6Y-402-MONOMER"/>
<dbReference type="Proteomes" id="UP000000664">
    <property type="component" value="Chromosome"/>
</dbReference>
<dbReference type="GO" id="GO:0005737">
    <property type="term" value="C:cytoplasm"/>
    <property type="evidence" value="ECO:0007669"/>
    <property type="project" value="UniProtKB-SubCell"/>
</dbReference>
<dbReference type="GO" id="GO:0003677">
    <property type="term" value="F:DNA binding"/>
    <property type="evidence" value="ECO:0007669"/>
    <property type="project" value="UniProtKB-UniRule"/>
</dbReference>
<dbReference type="GO" id="GO:0003700">
    <property type="term" value="F:DNA-binding transcription factor activity"/>
    <property type="evidence" value="ECO:0007669"/>
    <property type="project" value="UniProtKB-UniRule"/>
</dbReference>
<dbReference type="GO" id="GO:0045892">
    <property type="term" value="P:negative regulation of DNA-templated transcription"/>
    <property type="evidence" value="ECO:0007669"/>
    <property type="project" value="InterPro"/>
</dbReference>
<dbReference type="GO" id="GO:0051775">
    <property type="term" value="P:response to redox state"/>
    <property type="evidence" value="ECO:0007669"/>
    <property type="project" value="InterPro"/>
</dbReference>
<dbReference type="Gene3D" id="3.40.50.720">
    <property type="entry name" value="NAD(P)-binding Rossmann-like Domain"/>
    <property type="match status" value="1"/>
</dbReference>
<dbReference type="Gene3D" id="1.10.10.10">
    <property type="entry name" value="Winged helix-like DNA-binding domain superfamily/Winged helix DNA-binding domain"/>
    <property type="match status" value="1"/>
</dbReference>
<dbReference type="HAMAP" id="MF_01131">
    <property type="entry name" value="Rex"/>
    <property type="match status" value="1"/>
</dbReference>
<dbReference type="InterPro" id="IPR003781">
    <property type="entry name" value="CoA-bd"/>
</dbReference>
<dbReference type="InterPro" id="IPR036291">
    <property type="entry name" value="NAD(P)-bd_dom_sf"/>
</dbReference>
<dbReference type="InterPro" id="IPR009718">
    <property type="entry name" value="Rex_DNA-bd_C_dom"/>
</dbReference>
<dbReference type="InterPro" id="IPR022876">
    <property type="entry name" value="Tscrpt_rep_Rex"/>
</dbReference>
<dbReference type="InterPro" id="IPR036388">
    <property type="entry name" value="WH-like_DNA-bd_sf"/>
</dbReference>
<dbReference type="InterPro" id="IPR036390">
    <property type="entry name" value="WH_DNA-bd_sf"/>
</dbReference>
<dbReference type="NCBIfam" id="NF003989">
    <property type="entry name" value="PRK05472.1-3"/>
    <property type="match status" value="1"/>
</dbReference>
<dbReference type="NCBIfam" id="NF003991">
    <property type="entry name" value="PRK05472.1-5"/>
    <property type="match status" value="1"/>
</dbReference>
<dbReference type="NCBIfam" id="NF003994">
    <property type="entry name" value="PRK05472.2-3"/>
    <property type="match status" value="1"/>
</dbReference>
<dbReference type="NCBIfam" id="NF003995">
    <property type="entry name" value="PRK05472.2-4"/>
    <property type="match status" value="1"/>
</dbReference>
<dbReference type="NCBIfam" id="NF003996">
    <property type="entry name" value="PRK05472.2-5"/>
    <property type="match status" value="1"/>
</dbReference>
<dbReference type="PANTHER" id="PTHR35786">
    <property type="entry name" value="REDOX-SENSING TRANSCRIPTIONAL REPRESSOR REX"/>
    <property type="match status" value="1"/>
</dbReference>
<dbReference type="PANTHER" id="PTHR35786:SF1">
    <property type="entry name" value="REDOX-SENSING TRANSCRIPTIONAL REPRESSOR REX 1"/>
    <property type="match status" value="1"/>
</dbReference>
<dbReference type="Pfam" id="PF02629">
    <property type="entry name" value="CoA_binding"/>
    <property type="match status" value="1"/>
</dbReference>
<dbReference type="Pfam" id="PF06971">
    <property type="entry name" value="Put_DNA-bind_N"/>
    <property type="match status" value="1"/>
</dbReference>
<dbReference type="SMART" id="SM00881">
    <property type="entry name" value="CoA_binding"/>
    <property type="match status" value="1"/>
</dbReference>
<dbReference type="SUPFAM" id="SSF51735">
    <property type="entry name" value="NAD(P)-binding Rossmann-fold domains"/>
    <property type="match status" value="1"/>
</dbReference>
<dbReference type="SUPFAM" id="SSF46785">
    <property type="entry name" value="Winged helix' DNA-binding domain"/>
    <property type="match status" value="1"/>
</dbReference>
<comment type="function">
    <text evidence="1">Modulates transcription in response to changes in cellular NADH/NAD(+) redox state.</text>
</comment>
<comment type="subunit">
    <text evidence="1">Homodimer.</text>
</comment>
<comment type="subcellular location">
    <subcellularLocation>
        <location evidence="1">Cytoplasm</location>
    </subcellularLocation>
</comment>
<comment type="similarity">
    <text evidence="1">Belongs to the transcriptional regulatory Rex family.</text>
</comment>
<feature type="chain" id="PRO_1000065404" description="Redox-sensing transcriptional repressor Rex">
    <location>
        <begin position="1"/>
        <end position="214"/>
    </location>
</feature>
<feature type="DNA-binding region" description="H-T-H motif" evidence="1">
    <location>
        <begin position="16"/>
        <end position="55"/>
    </location>
</feature>
<feature type="binding site" evidence="1">
    <location>
        <begin position="90"/>
        <end position="95"/>
    </location>
    <ligand>
        <name>NAD(+)</name>
        <dbReference type="ChEBI" id="CHEBI:57540"/>
    </ligand>
</feature>
<sequence length="214" mass="24074">MDEIKIPKATARRLPLYYRYLIFLNDEGKEKVSSTELAEAVQVDSASIRRDFSYFGALGKRGYGYDVKNLLNFFKKILNQDTLTNVALVGVGNMGHALLNYNFKRTNNIRISAAFDINPEITGTIMSGVPVYDMSEMKKQLREQQITIAILCVPQTAAQKTANEMFDAGIKGIMNFTPLRLSAPSSVRVQNVDLATELQTLIYFLDSDKDKNKK</sequence>
<accession>Q045R4</accession>
<evidence type="ECO:0000255" key="1">
    <source>
        <dbReference type="HAMAP-Rule" id="MF_01131"/>
    </source>
</evidence>
<proteinExistence type="inferred from homology"/>
<name>REX_LACGA</name>
<gene>
    <name evidence="1" type="primary">rex</name>
    <name type="ordered locus">LGAS_0403</name>
</gene>